<name>LCE3B_HUMAN</name>
<reference key="1">
    <citation type="journal article" date="2006" name="Nature">
        <title>The DNA sequence and biological annotation of human chromosome 1.</title>
        <authorList>
            <person name="Gregory S.G."/>
            <person name="Barlow K.F."/>
            <person name="McLay K.E."/>
            <person name="Kaul R."/>
            <person name="Swarbreck D."/>
            <person name="Dunham A."/>
            <person name="Scott C.E."/>
            <person name="Howe K.L."/>
            <person name="Woodfine K."/>
            <person name="Spencer C.C.A."/>
            <person name="Jones M.C."/>
            <person name="Gillson C."/>
            <person name="Searle S."/>
            <person name="Zhou Y."/>
            <person name="Kokocinski F."/>
            <person name="McDonald L."/>
            <person name="Evans R."/>
            <person name="Phillips K."/>
            <person name="Atkinson A."/>
            <person name="Cooper R."/>
            <person name="Jones C."/>
            <person name="Hall R.E."/>
            <person name="Andrews T.D."/>
            <person name="Lloyd C."/>
            <person name="Ainscough R."/>
            <person name="Almeida J.P."/>
            <person name="Ambrose K.D."/>
            <person name="Anderson F."/>
            <person name="Andrew R.W."/>
            <person name="Ashwell R.I.S."/>
            <person name="Aubin K."/>
            <person name="Babbage A.K."/>
            <person name="Bagguley C.L."/>
            <person name="Bailey J."/>
            <person name="Beasley H."/>
            <person name="Bethel G."/>
            <person name="Bird C.P."/>
            <person name="Bray-Allen S."/>
            <person name="Brown J.Y."/>
            <person name="Brown A.J."/>
            <person name="Buckley D."/>
            <person name="Burton J."/>
            <person name="Bye J."/>
            <person name="Carder C."/>
            <person name="Chapman J.C."/>
            <person name="Clark S.Y."/>
            <person name="Clarke G."/>
            <person name="Clee C."/>
            <person name="Cobley V."/>
            <person name="Collier R.E."/>
            <person name="Corby N."/>
            <person name="Coville G.J."/>
            <person name="Davies J."/>
            <person name="Deadman R."/>
            <person name="Dunn M."/>
            <person name="Earthrowl M."/>
            <person name="Ellington A.G."/>
            <person name="Errington H."/>
            <person name="Frankish A."/>
            <person name="Frankland J."/>
            <person name="French L."/>
            <person name="Garner P."/>
            <person name="Garnett J."/>
            <person name="Gay L."/>
            <person name="Ghori M.R.J."/>
            <person name="Gibson R."/>
            <person name="Gilby L.M."/>
            <person name="Gillett W."/>
            <person name="Glithero R.J."/>
            <person name="Grafham D.V."/>
            <person name="Griffiths C."/>
            <person name="Griffiths-Jones S."/>
            <person name="Grocock R."/>
            <person name="Hammond S."/>
            <person name="Harrison E.S.I."/>
            <person name="Hart E."/>
            <person name="Haugen E."/>
            <person name="Heath P.D."/>
            <person name="Holmes S."/>
            <person name="Holt K."/>
            <person name="Howden P.J."/>
            <person name="Hunt A.R."/>
            <person name="Hunt S.E."/>
            <person name="Hunter G."/>
            <person name="Isherwood J."/>
            <person name="James R."/>
            <person name="Johnson C."/>
            <person name="Johnson D."/>
            <person name="Joy A."/>
            <person name="Kay M."/>
            <person name="Kershaw J.K."/>
            <person name="Kibukawa M."/>
            <person name="Kimberley A.M."/>
            <person name="King A."/>
            <person name="Knights A.J."/>
            <person name="Lad H."/>
            <person name="Laird G."/>
            <person name="Lawlor S."/>
            <person name="Leongamornlert D.A."/>
            <person name="Lloyd D.M."/>
            <person name="Loveland J."/>
            <person name="Lovell J."/>
            <person name="Lush M.J."/>
            <person name="Lyne R."/>
            <person name="Martin S."/>
            <person name="Mashreghi-Mohammadi M."/>
            <person name="Matthews L."/>
            <person name="Matthews N.S.W."/>
            <person name="McLaren S."/>
            <person name="Milne S."/>
            <person name="Mistry S."/>
            <person name="Moore M.J.F."/>
            <person name="Nickerson T."/>
            <person name="O'Dell C.N."/>
            <person name="Oliver K."/>
            <person name="Palmeiri A."/>
            <person name="Palmer S.A."/>
            <person name="Parker A."/>
            <person name="Patel D."/>
            <person name="Pearce A.V."/>
            <person name="Peck A.I."/>
            <person name="Pelan S."/>
            <person name="Phelps K."/>
            <person name="Phillimore B.J."/>
            <person name="Plumb R."/>
            <person name="Rajan J."/>
            <person name="Raymond C."/>
            <person name="Rouse G."/>
            <person name="Saenphimmachak C."/>
            <person name="Sehra H.K."/>
            <person name="Sheridan E."/>
            <person name="Shownkeen R."/>
            <person name="Sims S."/>
            <person name="Skuce C.D."/>
            <person name="Smith M."/>
            <person name="Steward C."/>
            <person name="Subramanian S."/>
            <person name="Sycamore N."/>
            <person name="Tracey A."/>
            <person name="Tromans A."/>
            <person name="Van Helmond Z."/>
            <person name="Wall M."/>
            <person name="Wallis J.M."/>
            <person name="White S."/>
            <person name="Whitehead S.L."/>
            <person name="Wilkinson J.E."/>
            <person name="Willey D.L."/>
            <person name="Williams H."/>
            <person name="Wilming L."/>
            <person name="Wray P.W."/>
            <person name="Wu Z."/>
            <person name="Coulson A."/>
            <person name="Vaudin M."/>
            <person name="Sulston J.E."/>
            <person name="Durbin R.M."/>
            <person name="Hubbard T."/>
            <person name="Wooster R."/>
            <person name="Dunham I."/>
            <person name="Carter N.P."/>
            <person name="McVean G."/>
            <person name="Ross M.T."/>
            <person name="Harrow J."/>
            <person name="Olson M.V."/>
            <person name="Beck S."/>
            <person name="Rogers J."/>
            <person name="Bentley D.R."/>
        </authorList>
    </citation>
    <scope>NUCLEOTIDE SEQUENCE [LARGE SCALE GENOMIC DNA]</scope>
</reference>
<reference key="2">
    <citation type="journal article" date="2005" name="J. Invest. Dermatol.">
        <title>Late cornified envelope family in differentiating epithelia -- response to calcium and ultraviolet irradiation.</title>
        <authorList>
            <person name="Jackson B."/>
            <person name="Tilli C.L."/>
            <person name="Hardman M."/>
            <person name="Avilion A."/>
            <person name="Macleod M."/>
            <person name="Ashcroft G."/>
            <person name="Byrne C."/>
        </authorList>
    </citation>
    <scope>NOMENCLATURE</scope>
    <scope>TISSUE SPECIFICITY</scope>
</reference>
<reference key="3">
    <citation type="journal article" date="2017" name="J. Invest. Dermatol.">
        <title>Psoriasis-Associated Late Cornified Envelope (LCE) Proteins Have Antibacterial Activity.</title>
        <authorList>
            <person name="Niehues H."/>
            <person name="Tsoi L.C."/>
            <person name="van der Krieken D.A."/>
            <person name="Jansen P.A.M."/>
            <person name="Oortveld M.A.W."/>
            <person name="Rodijk-Olthuis D."/>
            <person name="van Vlijmen I.M.J.J."/>
            <person name="Hendriks W.J.A.J."/>
            <person name="Helder R.W."/>
            <person name="Bouwstra J.A."/>
            <person name="van den Bogaard E.H."/>
            <person name="Stuart P.E."/>
            <person name="Nair R.P."/>
            <person name="Elder J.T."/>
            <person name="Zeeuwen P.L.J.M."/>
            <person name="Schalkwijk J."/>
        </authorList>
    </citation>
    <scope>FUNCTION</scope>
</reference>
<dbReference type="EMBL" id="AL139247">
    <property type="status" value="NOT_ANNOTATED_CDS"/>
    <property type="molecule type" value="Genomic_DNA"/>
</dbReference>
<dbReference type="CCDS" id="CCDS1016.1"/>
<dbReference type="RefSeq" id="NP_848520.1">
    <property type="nucleotide sequence ID" value="NM_178433.1"/>
</dbReference>
<dbReference type="BioGRID" id="131649">
    <property type="interactions" value="45"/>
</dbReference>
<dbReference type="FunCoup" id="Q5TA77">
    <property type="interactions" value="27"/>
</dbReference>
<dbReference type="IntAct" id="Q5TA77">
    <property type="interactions" value="39"/>
</dbReference>
<dbReference type="STRING" id="9606.ENSP00000335358"/>
<dbReference type="PhosphoSitePlus" id="Q5TA77"/>
<dbReference type="BioMuta" id="LCE3B"/>
<dbReference type="DMDM" id="74745784"/>
<dbReference type="MassIVE" id="Q5TA77"/>
<dbReference type="PaxDb" id="9606-ENSP00000335358"/>
<dbReference type="PeptideAtlas" id="Q5TA77"/>
<dbReference type="DNASU" id="353143"/>
<dbReference type="Ensembl" id="ENST00000335633.1">
    <property type="protein sequence ID" value="ENSP00000335358.1"/>
    <property type="gene ID" value="ENSG00000187238.5"/>
</dbReference>
<dbReference type="GeneID" id="353143"/>
<dbReference type="KEGG" id="hsa:353143"/>
<dbReference type="MANE-Select" id="ENST00000335633.1">
    <property type="protein sequence ID" value="ENSP00000335358.1"/>
    <property type="RefSeq nucleotide sequence ID" value="NM_178433.1"/>
    <property type="RefSeq protein sequence ID" value="NP_848520.1"/>
</dbReference>
<dbReference type="UCSC" id="uc010pds.2">
    <property type="organism name" value="human"/>
</dbReference>
<dbReference type="AGR" id="HGNC:29462"/>
<dbReference type="CTD" id="353143"/>
<dbReference type="DisGeNET" id="353143"/>
<dbReference type="GeneCards" id="LCE3B"/>
<dbReference type="HGNC" id="HGNC:29462">
    <property type="gene designation" value="LCE3B"/>
</dbReference>
<dbReference type="HPA" id="ENSG00000187238">
    <property type="expression patterns" value="Tissue enriched (lymphoid)"/>
</dbReference>
<dbReference type="MIM" id="612614">
    <property type="type" value="gene"/>
</dbReference>
<dbReference type="neXtProt" id="NX_Q5TA77"/>
<dbReference type="OpenTargets" id="ENSG00000187238"/>
<dbReference type="PharmGKB" id="PA134946555"/>
<dbReference type="VEuPathDB" id="HostDB:ENSG00000187238"/>
<dbReference type="eggNOG" id="ENOG502TDZ9">
    <property type="taxonomic scope" value="Eukaryota"/>
</dbReference>
<dbReference type="GeneTree" id="ENSGT00940000165404"/>
<dbReference type="HOGENOM" id="CLU_152038_1_0_1"/>
<dbReference type="InParanoid" id="Q5TA77"/>
<dbReference type="OMA" id="CCRSHRC"/>
<dbReference type="PAN-GO" id="Q5TA77">
    <property type="GO annotations" value="0 GO annotations based on evolutionary models"/>
</dbReference>
<dbReference type="TreeFam" id="TF338709"/>
<dbReference type="PathwayCommons" id="Q5TA77"/>
<dbReference type="Reactome" id="R-HSA-6809371">
    <property type="pathway name" value="Formation of the cornified envelope"/>
</dbReference>
<dbReference type="SignaLink" id="Q5TA77"/>
<dbReference type="BioGRID-ORCS" id="353143">
    <property type="hits" value="12 hits in 1107 CRISPR screens"/>
</dbReference>
<dbReference type="GenomeRNAi" id="353143"/>
<dbReference type="Pharos" id="Q5TA77">
    <property type="development level" value="Tbio"/>
</dbReference>
<dbReference type="PRO" id="PR:Q5TA77"/>
<dbReference type="Proteomes" id="UP000005640">
    <property type="component" value="Chromosome 1"/>
</dbReference>
<dbReference type="RNAct" id="Q5TA77">
    <property type="molecule type" value="protein"/>
</dbReference>
<dbReference type="Bgee" id="ENSG00000187238">
    <property type="expression patterns" value="Expressed in granulocyte and 7 other cell types or tissues"/>
</dbReference>
<dbReference type="GO" id="GO:0050829">
    <property type="term" value="P:defense response to Gram-negative bacterium"/>
    <property type="evidence" value="ECO:0000314"/>
    <property type="project" value="UniProtKB"/>
</dbReference>
<dbReference type="GO" id="GO:0050830">
    <property type="term" value="P:defense response to Gram-positive bacterium"/>
    <property type="evidence" value="ECO:0000314"/>
    <property type="project" value="UniProtKB"/>
</dbReference>
<dbReference type="GO" id="GO:0031424">
    <property type="term" value="P:keratinization"/>
    <property type="evidence" value="ECO:0007669"/>
    <property type="project" value="UniProtKB-KW"/>
</dbReference>
<dbReference type="GO" id="GO:0031640">
    <property type="term" value="P:killing of cells of another organism"/>
    <property type="evidence" value="ECO:0000314"/>
    <property type="project" value="UniProtKB"/>
</dbReference>
<dbReference type="InterPro" id="IPR028205">
    <property type="entry name" value="LCE"/>
</dbReference>
<dbReference type="Pfam" id="PF14672">
    <property type="entry name" value="LCE"/>
    <property type="match status" value="1"/>
</dbReference>
<comment type="function">
    <text evidence="3 6">A structural component of the cornified envelope of the stratum corneum involved in innate cutaneous host defense (Probable). Possesses defensin-like antimicrobial activity against a broad spectrum of Gram-positive and Gram-negative bacteria, both aerobic and anaerobic species. Upon inflammation, may regulate skin barrier repair by shaping cutaneous microbiota composition and immune response to bacterial antigens (PubMed:28634035).</text>
</comment>
<comment type="interaction">
    <interactant intactId="EBI-11974495">
        <id>Q5TA77</id>
    </interactant>
    <interactant intactId="EBI-1211484">
        <id>P05187</id>
        <label>ALPP</label>
    </interactant>
    <organismsDiffer>false</organismsDiffer>
    <experiments>3</experiments>
</comment>
<comment type="interaction">
    <interactant intactId="EBI-11974495">
        <id>Q5TA77</id>
    </interactant>
    <interactant intactId="EBI-14156412">
        <id>Q08AG9</id>
        <label>CYP21A2</label>
    </interactant>
    <organismsDiffer>false</organismsDiffer>
    <experiments>3</experiments>
</comment>
<comment type="interaction">
    <interactant intactId="EBI-11974495">
        <id>Q5TA77</id>
    </interactant>
    <interactant intactId="EBI-3867333">
        <id>A8MQ03</id>
        <label>CYSRT1</label>
    </interactant>
    <organismsDiffer>false</organismsDiffer>
    <experiments>3</experiments>
</comment>
<comment type="interaction">
    <interactant intactId="EBI-11974495">
        <id>Q5TA77</id>
    </interactant>
    <interactant intactId="EBI-11959885">
        <id>Q07627</id>
        <label>KRTAP1-1</label>
    </interactant>
    <organismsDiffer>false</organismsDiffer>
    <experiments>3</experiments>
</comment>
<comment type="interaction">
    <interactant intactId="EBI-11974495">
        <id>Q5TA77</id>
    </interactant>
    <interactant intactId="EBI-11749135">
        <id>Q8IUG1</id>
        <label>KRTAP1-3</label>
    </interactant>
    <organismsDiffer>false</organismsDiffer>
    <experiments>3</experiments>
</comment>
<comment type="interaction">
    <interactant intactId="EBI-11974495">
        <id>Q5TA77</id>
    </interactant>
    <interactant intactId="EBI-11955579">
        <id>P60014</id>
        <label>KRTAP10-10</label>
    </interactant>
    <organismsDiffer>false</organismsDiffer>
    <experiments>3</experiments>
</comment>
<comment type="interaction">
    <interactant intactId="EBI-11974495">
        <id>Q5TA77</id>
    </interactant>
    <interactant intactId="EBI-10217483">
        <id>P60412</id>
        <label>KRTAP10-11</label>
    </interactant>
    <organismsDiffer>false</organismsDiffer>
    <experiments>3</experiments>
</comment>
<comment type="interaction">
    <interactant intactId="EBI-11974495">
        <id>Q5TA77</id>
    </interactant>
    <interactant intactId="EBI-10172150">
        <id>P60370</id>
        <label>KRTAP10-5</label>
    </interactant>
    <organismsDiffer>false</organismsDiffer>
    <experiments>3</experiments>
</comment>
<comment type="interaction">
    <interactant intactId="EBI-11974495">
        <id>Q5TA77</id>
    </interactant>
    <interactant intactId="EBI-12012928">
        <id>P60371</id>
        <label>KRTAP10-6</label>
    </interactant>
    <organismsDiffer>false</organismsDiffer>
    <experiments>3</experiments>
</comment>
<comment type="interaction">
    <interactant intactId="EBI-11974495">
        <id>Q5TA77</id>
    </interactant>
    <interactant intactId="EBI-10172290">
        <id>P60409</id>
        <label>KRTAP10-7</label>
    </interactant>
    <organismsDiffer>false</organismsDiffer>
    <experiments>3</experiments>
</comment>
<comment type="interaction">
    <interactant intactId="EBI-11974495">
        <id>Q5TA77</id>
    </interactant>
    <interactant intactId="EBI-10171774">
        <id>P60410</id>
        <label>KRTAP10-8</label>
    </interactant>
    <organismsDiffer>false</organismsDiffer>
    <experiments>3</experiments>
</comment>
<comment type="interaction">
    <interactant intactId="EBI-11974495">
        <id>Q5TA77</id>
    </interactant>
    <interactant intactId="EBI-10172052">
        <id>P60411</id>
        <label>KRTAP10-9</label>
    </interactant>
    <organismsDiffer>false</organismsDiffer>
    <experiments>3</experiments>
</comment>
<comment type="interaction">
    <interactant intactId="EBI-11974495">
        <id>Q5TA77</id>
    </interactant>
    <interactant intactId="EBI-10302392">
        <id>Q9BYQ6</id>
        <label>KRTAP4-11</label>
    </interactant>
    <organismsDiffer>false</organismsDiffer>
    <experiments>3</experiments>
</comment>
<comment type="interaction">
    <interactant intactId="EBI-11974495">
        <id>Q5TA77</id>
    </interactant>
    <interactant intactId="EBI-739863">
        <id>Q9BQ66</id>
        <label>KRTAP4-12</label>
    </interactant>
    <organismsDiffer>false</organismsDiffer>
    <experiments>3</experiments>
</comment>
<comment type="interaction">
    <interactant intactId="EBI-11974495">
        <id>Q5TA77</id>
    </interactant>
    <interactant intactId="EBI-10172511">
        <id>Q9BYR5</id>
        <label>KRTAP4-2</label>
    </interactant>
    <organismsDiffer>false</organismsDiffer>
    <experiments>3</experiments>
</comment>
<comment type="interaction">
    <interactant intactId="EBI-11974495">
        <id>Q5TA77</id>
    </interactant>
    <interactant intactId="EBI-11958132">
        <id>Q9BYR3</id>
        <label>KRTAP4-4</label>
    </interactant>
    <organismsDiffer>false</organismsDiffer>
    <experiments>3</experiments>
</comment>
<comment type="interaction">
    <interactant intactId="EBI-11974495">
        <id>Q5TA77</id>
    </interactant>
    <interactant intactId="EBI-11993254">
        <id>Q9BYR2</id>
        <label>KRTAP4-5</label>
    </interactant>
    <organismsDiffer>false</organismsDiffer>
    <experiments>3</experiments>
</comment>
<comment type="interaction">
    <interactant intactId="EBI-11974495">
        <id>Q5TA77</id>
    </interactant>
    <interactant intactId="EBI-11993296">
        <id>Q6L8G4</id>
        <label>KRTAP5-11</label>
    </interactant>
    <organismsDiffer>false</organismsDiffer>
    <experiments>3</experiments>
</comment>
<comment type="interaction">
    <interactant intactId="EBI-11974495">
        <id>Q5TA77</id>
    </interactant>
    <interactant intactId="EBI-11958178">
        <id>Q701N4</id>
        <label>KRTAP5-2</label>
    </interactant>
    <organismsDiffer>false</organismsDiffer>
    <experiments>3</experiments>
</comment>
<comment type="interaction">
    <interactant intactId="EBI-11974495">
        <id>Q5TA77</id>
    </interactant>
    <interactant intactId="EBI-11963072">
        <id>Q6L8H1</id>
        <label>KRTAP5-4</label>
    </interactant>
    <organismsDiffer>false</organismsDiffer>
    <experiments>3</experiments>
</comment>
<comment type="interaction">
    <interactant intactId="EBI-11974495">
        <id>Q5TA77</id>
    </interactant>
    <interactant intactId="EBI-10250562">
        <id>Q6L8G9</id>
        <label>KRTAP5-6</label>
    </interactant>
    <organismsDiffer>false</organismsDiffer>
    <experiments>3</experiments>
</comment>
<comment type="interaction">
    <interactant intactId="EBI-11974495">
        <id>Q5TA77</id>
    </interactant>
    <interactant intactId="EBI-11987425">
        <id>Q6L8G8</id>
        <label>KRTAP5-7</label>
    </interactant>
    <organismsDiffer>false</organismsDiffer>
    <experiments>3</experiments>
</comment>
<comment type="interaction">
    <interactant intactId="EBI-11974495">
        <id>Q5TA77</id>
    </interactant>
    <interactant intactId="EBI-3958099">
        <id>P26371</id>
        <label>KRTAP5-9</label>
    </interactant>
    <organismsDiffer>false</organismsDiffer>
    <experiments>4</experiments>
</comment>
<comment type="interaction">
    <interactant intactId="EBI-11974495">
        <id>Q5TA77</id>
    </interactant>
    <interactant intactId="EBI-1044640">
        <id>Q9BYQ4</id>
        <label>KRTAP9-2</label>
    </interactant>
    <organismsDiffer>false</organismsDiffer>
    <experiments>3</experiments>
</comment>
<comment type="interaction">
    <interactant intactId="EBI-11974495">
        <id>Q5TA77</id>
    </interactant>
    <interactant intactId="EBI-1043191">
        <id>Q9BYQ3</id>
        <label>KRTAP9-3</label>
    </interactant>
    <organismsDiffer>false</organismsDiffer>
    <experiments>3</experiments>
</comment>
<comment type="interaction">
    <interactant intactId="EBI-11974495">
        <id>Q5TA77</id>
    </interactant>
    <interactant intactId="EBI-11958364">
        <id>Q9BYQ0</id>
        <label>KRTAP9-8</label>
    </interactant>
    <organismsDiffer>false</organismsDiffer>
    <experiments>3</experiments>
</comment>
<comment type="interaction">
    <interactant intactId="EBI-11974495">
        <id>Q5TA77</id>
    </interactant>
    <interactant intactId="EBI-10245913">
        <id>Q5T7P3</id>
        <label>LCE1B</label>
    </interactant>
    <organismsDiffer>false</organismsDiffer>
    <experiments>6</experiments>
</comment>
<comment type="interaction">
    <interactant intactId="EBI-11974495">
        <id>Q5TA77</id>
    </interactant>
    <interactant intactId="EBI-12224199">
        <id>Q5T751</id>
        <label>LCE1C</label>
    </interactant>
    <organismsDiffer>false</organismsDiffer>
    <experiments>3</experiments>
</comment>
<comment type="interaction">
    <interactant intactId="EBI-11974495">
        <id>Q5TA77</id>
    </interactant>
    <interactant intactId="EBI-11741311">
        <id>Q5T752</id>
        <label>LCE1D</label>
    </interactant>
    <organismsDiffer>false</organismsDiffer>
    <experiments>3</experiments>
</comment>
<comment type="interaction">
    <interactant intactId="EBI-11974495">
        <id>Q5TA77</id>
    </interactant>
    <interactant intactId="EBI-11955335">
        <id>Q5T753</id>
        <label>LCE1E</label>
    </interactant>
    <organismsDiffer>false</organismsDiffer>
    <experiments>3</experiments>
</comment>
<comment type="interaction">
    <interactant intactId="EBI-11974495">
        <id>Q5TA77</id>
    </interactant>
    <interactant intactId="EBI-11958008">
        <id>Q5T754</id>
        <label>LCE1F</label>
    </interactant>
    <organismsDiffer>false</organismsDiffer>
    <experiments>6</experiments>
</comment>
<comment type="interaction">
    <interactant intactId="EBI-11974495">
        <id>Q5TA77</id>
    </interactant>
    <interactant intactId="EBI-11973993">
        <id>Q5TA81</id>
        <label>LCE2C</label>
    </interactant>
    <organismsDiffer>false</organismsDiffer>
    <experiments>3</experiments>
</comment>
<comment type="interaction">
    <interactant intactId="EBI-11974495">
        <id>Q5TA77</id>
    </interactant>
    <interactant intactId="EBI-9394625">
        <id>Q5TA76</id>
        <label>LCE3A</label>
    </interactant>
    <organismsDiffer>false</organismsDiffer>
    <experiments>3</experiments>
</comment>
<comment type="interaction">
    <interactant intactId="EBI-11974495">
        <id>Q5TA77</id>
    </interactant>
    <interactant intactId="EBI-3918154">
        <id>Q9UGC6</id>
        <label>RGS17</label>
    </interactant>
    <organismsDiffer>false</organismsDiffer>
    <experiments>5</experiments>
</comment>
<comment type="interaction">
    <interactant intactId="EBI-11974495">
        <id>Q5TA77</id>
    </interactant>
    <interactant intactId="EBI-2340927">
        <id>P78317</id>
        <label>RNF4</label>
    </interactant>
    <organismsDiffer>false</organismsDiffer>
    <experiments>3</experiments>
</comment>
<comment type="interaction">
    <interactant intactId="EBI-11974495">
        <id>Q5TA77</id>
    </interactant>
    <interactant intactId="EBI-750494">
        <id>P49901</id>
        <label>SMCP</label>
    </interactant>
    <organismsDiffer>false</organismsDiffer>
    <experiments>3</experiments>
</comment>
<comment type="interaction">
    <interactant intactId="EBI-11974495">
        <id>Q5TA77</id>
    </interactant>
    <interactant intactId="EBI-779636">
        <id>P01137</id>
        <label>TGFB1</label>
    </interactant>
    <organismsDiffer>false</organismsDiffer>
    <experiments>3</experiments>
</comment>
<comment type="interaction">
    <interactant intactId="EBI-11974495">
        <id>Q5TA77</id>
    </interactant>
    <interactant intactId="EBI-10180829">
        <id>Q7KZS0</id>
        <label>UBE2I</label>
    </interactant>
    <organismsDiffer>false</organismsDiffer>
    <experiments>3</experiments>
</comment>
<comment type="interaction">
    <interactant intactId="EBI-11974495">
        <id>Q5TA77</id>
    </interactant>
    <interactant intactId="EBI-17634549">
        <id>Q9UJ78-2</id>
        <label>ZMYM5</label>
    </interactant>
    <organismsDiffer>false</organismsDiffer>
    <experiments>3</experiments>
</comment>
<comment type="tissue specificity">
    <text evidence="2">Skin-specific. Expression was readily detected in adult trunk skin, adult arm skin, fetal skin, penal skin, vulva, esophagus and tongue. Not expressed in the cervix, rectum, lung, colon, or placenta.</text>
</comment>
<comment type="similarity">
    <text evidence="5">Belongs to the LCE family.</text>
</comment>
<protein>
    <recommendedName>
        <fullName evidence="4">Late cornified envelope protein 3B</fullName>
    </recommendedName>
    <alternativeName>
        <fullName evidence="4">Late envelope protein 14</fullName>
    </alternativeName>
</protein>
<feature type="chain" id="PRO_0000235334" description="Late cornified envelope protein 3B">
    <location>
        <begin position="1"/>
        <end position="95"/>
    </location>
</feature>
<feature type="region of interest" description="Disordered" evidence="1">
    <location>
        <begin position="1"/>
        <end position="29"/>
    </location>
</feature>
<feature type="region of interest" description="Disordered" evidence="1">
    <location>
        <begin position="68"/>
        <end position="95"/>
    </location>
</feature>
<feature type="compositionally biased region" description="Low complexity" evidence="1">
    <location>
        <begin position="1"/>
        <end position="13"/>
    </location>
</feature>
<organism>
    <name type="scientific">Homo sapiens</name>
    <name type="common">Human</name>
    <dbReference type="NCBI Taxonomy" id="9606"/>
    <lineage>
        <taxon>Eukaryota</taxon>
        <taxon>Metazoa</taxon>
        <taxon>Chordata</taxon>
        <taxon>Craniata</taxon>
        <taxon>Vertebrata</taxon>
        <taxon>Euteleostomi</taxon>
        <taxon>Mammalia</taxon>
        <taxon>Eutheria</taxon>
        <taxon>Euarchontoglires</taxon>
        <taxon>Primates</taxon>
        <taxon>Haplorrhini</taxon>
        <taxon>Catarrhini</taxon>
        <taxon>Hominidae</taxon>
        <taxon>Homo</taxon>
    </lineage>
</organism>
<keyword id="KW-0929">Antimicrobial</keyword>
<keyword id="KW-0417">Keratinization</keyword>
<keyword id="KW-1185">Reference proteome</keyword>
<sequence>MSCQQNQQQCQPLPKCPSPKCPPKSSAQCLPPASSCCAPRPGCCGGPSSEGGCCLSHHRCCRSHRCRRQSSNSCDRGSGQQDGASDCGYGSGGCC</sequence>
<gene>
    <name evidence="4 7" type="primary">LCE3B</name>
    <name evidence="4" type="synonym">LEP14</name>
</gene>
<proteinExistence type="evidence at protein level"/>
<evidence type="ECO:0000256" key="1">
    <source>
        <dbReference type="SAM" id="MobiDB-lite"/>
    </source>
</evidence>
<evidence type="ECO:0000269" key="2">
    <source>
    </source>
</evidence>
<evidence type="ECO:0000269" key="3">
    <source>
    </source>
</evidence>
<evidence type="ECO:0000303" key="4">
    <source>
    </source>
</evidence>
<evidence type="ECO:0000305" key="5"/>
<evidence type="ECO:0000305" key="6">
    <source>
    </source>
</evidence>
<evidence type="ECO:0000312" key="7">
    <source>
        <dbReference type="HGNC" id="HGNC:29462"/>
    </source>
</evidence>
<accession>Q5TA77</accession>